<accession>Q9PVD5</accession>
<gene>
    <name type="primary">UNC-5</name>
</gene>
<comment type="function">
    <text evidence="1">Receptor for netrin required for axon guidance. Mediates axon repulsion of neuronal growth cones in the developing nervous system upon ligand binding (By similarity).</text>
</comment>
<comment type="subcellular location">
    <subcellularLocation>
        <location evidence="1">Membrane</location>
        <topology evidence="1">Single-pass type I membrane protein</topology>
    </subcellularLocation>
</comment>
<comment type="tissue specificity">
    <text evidence="4">Expressed in the spinal cord, primarily in neurons of the lateral gray matter and in dorsal cells. Also expressed in reticulospinal neurons.</text>
</comment>
<comment type="developmental stage">
    <text evidence="4">Following spinal cord transection, it is strongly down-regulated at two weeks, during the period of axon dieback. Up-regulated at three weeks, when many axons are beginning to regenerate.</text>
</comment>
<comment type="PTM">
    <text evidence="1">Phosphorylated on cytoplasmic tyrosine residues.</text>
</comment>
<comment type="similarity">
    <text evidence="5">Belongs to the unc-5 family.</text>
</comment>
<feature type="chain" id="PRO_0000189079" description="Netrin receptor unc-5 homolog">
    <location>
        <begin position="1" status="less than"/>
        <end position="199" status="greater than"/>
    </location>
</feature>
<feature type="topological domain" description="Extracellular" evidence="2">
    <location>
        <begin position="1" status="less than"/>
        <end position="199" status="greater than"/>
    </location>
</feature>
<feature type="domain" description="Ig-like C2-type">
    <location>
        <begin position="103"/>
        <end position="192"/>
    </location>
</feature>
<feature type="glycosylation site" description="N-linked (GlcNAc...) asparagine" evidence="2">
    <location>
        <position position="172"/>
    </location>
</feature>
<feature type="disulfide bond" evidence="3">
    <location>
        <begin position="124"/>
        <end position="175"/>
    </location>
</feature>
<feature type="non-terminal residue">
    <location>
        <position position="1"/>
    </location>
</feature>
<feature type="non-terminal residue">
    <location>
        <position position="199"/>
    </location>
</feature>
<name>UNC5_PETMA</name>
<protein>
    <recommendedName>
        <fullName>Netrin receptor unc-5 homolog</fullName>
    </recommendedName>
</protein>
<evidence type="ECO:0000250" key="1"/>
<evidence type="ECO:0000255" key="2"/>
<evidence type="ECO:0000255" key="3">
    <source>
        <dbReference type="PROSITE-ProRule" id="PRU00114"/>
    </source>
</evidence>
<evidence type="ECO:0000269" key="4">
    <source>
    </source>
</evidence>
<evidence type="ECO:0000305" key="5"/>
<proteinExistence type="evidence at transcript level"/>
<keyword id="KW-0217">Developmental protein</keyword>
<keyword id="KW-1015">Disulfide bond</keyword>
<keyword id="KW-0325">Glycoprotein</keyword>
<keyword id="KW-0393">Immunoglobulin domain</keyword>
<keyword id="KW-0472">Membrane</keyword>
<keyword id="KW-0597">Phosphoprotein</keyword>
<keyword id="KW-0675">Receptor</keyword>
<dbReference type="EMBL" id="AF129475">
    <property type="protein sequence ID" value="AAF00103.1"/>
    <property type="molecule type" value="mRNA"/>
</dbReference>
<dbReference type="SMR" id="Q9PVD5"/>
<dbReference type="STRING" id="7757.ENSPMAP00000010563"/>
<dbReference type="GlyCosmos" id="Q9PVD5">
    <property type="glycosylation" value="1 site, No reported glycans"/>
</dbReference>
<dbReference type="Proteomes" id="UP001318040">
    <property type="component" value="Unplaced"/>
</dbReference>
<dbReference type="GO" id="GO:0005911">
    <property type="term" value="C:cell-cell junction"/>
    <property type="evidence" value="ECO:0007669"/>
    <property type="project" value="TreeGrafter"/>
</dbReference>
<dbReference type="GO" id="GO:0005886">
    <property type="term" value="C:plasma membrane"/>
    <property type="evidence" value="ECO:0007669"/>
    <property type="project" value="TreeGrafter"/>
</dbReference>
<dbReference type="GO" id="GO:0050839">
    <property type="term" value="F:cell adhesion molecule binding"/>
    <property type="evidence" value="ECO:0007669"/>
    <property type="project" value="TreeGrafter"/>
</dbReference>
<dbReference type="GO" id="GO:0098609">
    <property type="term" value="P:cell-cell adhesion"/>
    <property type="evidence" value="ECO:0007669"/>
    <property type="project" value="TreeGrafter"/>
</dbReference>
<dbReference type="FunFam" id="2.60.40.10:FF:000037">
    <property type="entry name" value="Unc-5 netrin receptor C"/>
    <property type="match status" value="1"/>
</dbReference>
<dbReference type="FunFam" id="2.60.40.10:FF:000039">
    <property type="entry name" value="Unc-5 netrin receptor C"/>
    <property type="match status" value="1"/>
</dbReference>
<dbReference type="Gene3D" id="2.60.40.10">
    <property type="entry name" value="Immunoglobulins"/>
    <property type="match status" value="2"/>
</dbReference>
<dbReference type="InterPro" id="IPR051275">
    <property type="entry name" value="Cell_adhesion_signaling"/>
</dbReference>
<dbReference type="InterPro" id="IPR007110">
    <property type="entry name" value="Ig-like_dom"/>
</dbReference>
<dbReference type="InterPro" id="IPR036179">
    <property type="entry name" value="Ig-like_dom_sf"/>
</dbReference>
<dbReference type="InterPro" id="IPR013783">
    <property type="entry name" value="Ig-like_fold"/>
</dbReference>
<dbReference type="InterPro" id="IPR013098">
    <property type="entry name" value="Ig_I-set"/>
</dbReference>
<dbReference type="InterPro" id="IPR003599">
    <property type="entry name" value="Ig_sub"/>
</dbReference>
<dbReference type="InterPro" id="IPR003598">
    <property type="entry name" value="Ig_sub2"/>
</dbReference>
<dbReference type="PANTHER" id="PTHR11640">
    <property type="entry name" value="NEPHRIN"/>
    <property type="match status" value="1"/>
</dbReference>
<dbReference type="PANTHER" id="PTHR11640:SF158">
    <property type="entry name" value="V-SET AND IMMUNOGLOBULIN DOMAIN-CONTAINING PROTEIN 10-LIKE 2"/>
    <property type="match status" value="1"/>
</dbReference>
<dbReference type="Pfam" id="PF07679">
    <property type="entry name" value="I-set"/>
    <property type="match status" value="1"/>
</dbReference>
<dbReference type="SMART" id="SM00409">
    <property type="entry name" value="IG"/>
    <property type="match status" value="1"/>
</dbReference>
<dbReference type="SMART" id="SM00408">
    <property type="entry name" value="IGc2"/>
    <property type="match status" value="1"/>
</dbReference>
<dbReference type="SUPFAM" id="SSF48726">
    <property type="entry name" value="Immunoglobulin"/>
    <property type="match status" value="1"/>
</dbReference>
<dbReference type="PROSITE" id="PS50835">
    <property type="entry name" value="IG_LIKE"/>
    <property type="match status" value="1"/>
</dbReference>
<reference key="1">
    <citation type="journal article" date="2000" name="Neurorehabil. Neural Repair">
        <title>Expression of the netrin receptor UNC-5 in lamprey brain: modulation by spinal cord transection.</title>
        <authorList>
            <person name="Shifman M.I."/>
            <person name="Selzer M.E."/>
        </authorList>
    </citation>
    <scope>NUCLEOTIDE SEQUENCE [MRNA]</scope>
    <scope>TISSUE SPECIFICITY</scope>
    <scope>DEVELOPMENTAL STAGE</scope>
    <source>
        <tissue>Brain</tissue>
    </source>
</reference>
<organism>
    <name type="scientific">Petromyzon marinus</name>
    <name type="common">Sea lamprey</name>
    <dbReference type="NCBI Taxonomy" id="7757"/>
    <lineage>
        <taxon>Eukaryota</taxon>
        <taxon>Metazoa</taxon>
        <taxon>Chordata</taxon>
        <taxon>Craniata</taxon>
        <taxon>Vertebrata</taxon>
        <taxon>Cyclostomata</taxon>
        <taxon>Hyperoartia</taxon>
        <taxon>Petromyzontiformes</taxon>
        <taxon>Petromyzontidae</taxon>
        <taxon>Petromyzon</taxon>
    </lineage>
</organism>
<sequence>HREEQARYIVKNKPVTMSCAASPATQIYFKCNGEWLHQKAHHIEEREDETTGRSVREVQTDVSRQQVEELFGLEDYWCQCVAWSAAGTSKSRKAYVRLAYLRKNFEQKPLGKYALLDHEVLLHCRPPDAIPQAEVEWLKSEEIIDPVIDQNFYITVDHNLIIKQTRLADSANYTCVAKNLVAKRRSSTATITVYVNGGW</sequence>